<keyword id="KW-0004">4Fe-4S</keyword>
<keyword id="KW-0997">Cell inner membrane</keyword>
<keyword id="KW-1003">Cell membrane</keyword>
<keyword id="KW-0408">Iron</keyword>
<keyword id="KW-0411">Iron-sulfur</keyword>
<keyword id="KW-0472">Membrane</keyword>
<keyword id="KW-0479">Metal-binding</keyword>
<keyword id="KW-0520">NAD</keyword>
<keyword id="KW-0874">Quinone</keyword>
<keyword id="KW-0677">Repeat</keyword>
<keyword id="KW-1278">Translocase</keyword>
<keyword id="KW-0830">Ubiquinone</keyword>
<comment type="function">
    <text evidence="1">NDH-1 shuttles electrons from NADH, via FMN and iron-sulfur (Fe-S) centers, to quinones in the respiratory chain. The immediate electron acceptor for the enzyme in this species is believed to be ubiquinone. Couples the redox reaction to proton translocation (for every two electrons transferred, four hydrogen ions are translocated across the cytoplasmic membrane), and thus conserves the redox energy in a proton gradient.</text>
</comment>
<comment type="catalytic activity">
    <reaction evidence="1">
        <text>a quinone + NADH + 5 H(+)(in) = a quinol + NAD(+) + 4 H(+)(out)</text>
        <dbReference type="Rhea" id="RHEA:57888"/>
        <dbReference type="ChEBI" id="CHEBI:15378"/>
        <dbReference type="ChEBI" id="CHEBI:24646"/>
        <dbReference type="ChEBI" id="CHEBI:57540"/>
        <dbReference type="ChEBI" id="CHEBI:57945"/>
        <dbReference type="ChEBI" id="CHEBI:132124"/>
    </reaction>
</comment>
<comment type="cofactor">
    <cofactor evidence="1">
        <name>[4Fe-4S] cluster</name>
        <dbReference type="ChEBI" id="CHEBI:49883"/>
    </cofactor>
    <text evidence="1">Binds 2 [4Fe-4S] clusters per subunit.</text>
</comment>
<comment type="subunit">
    <text evidence="1">NDH-1 is composed of 13 different subunits. Subunits NuoA, H, J, K, L, M, N constitute the membrane sector of the complex.</text>
</comment>
<comment type="subcellular location">
    <subcellularLocation>
        <location evidence="1">Cell inner membrane</location>
        <topology evidence="1">Peripheral membrane protein</topology>
    </subcellularLocation>
</comment>
<comment type="similarity">
    <text evidence="1">Belongs to the complex I 23 kDa subunit family.</text>
</comment>
<accession>Q1CHQ8</accession>
<accession>C4GV67</accession>
<evidence type="ECO:0000255" key="1">
    <source>
        <dbReference type="HAMAP-Rule" id="MF_01351"/>
    </source>
</evidence>
<proteinExistence type="inferred from homology"/>
<protein>
    <recommendedName>
        <fullName evidence="1">NADH-quinone oxidoreductase subunit I</fullName>
        <ecNumber evidence="1">7.1.1.-</ecNumber>
    </recommendedName>
    <alternativeName>
        <fullName evidence="1">NADH dehydrogenase I subunit I</fullName>
    </alternativeName>
    <alternativeName>
        <fullName evidence="1">NDH-1 subunit I</fullName>
    </alternativeName>
</protein>
<name>NUOI_YERPN</name>
<reference key="1">
    <citation type="journal article" date="2006" name="J. Bacteriol.">
        <title>Complete genome sequence of Yersinia pestis strains Antiqua and Nepal516: evidence of gene reduction in an emerging pathogen.</title>
        <authorList>
            <person name="Chain P.S.G."/>
            <person name="Hu P."/>
            <person name="Malfatti S.A."/>
            <person name="Radnedge L."/>
            <person name="Larimer F."/>
            <person name="Vergez L.M."/>
            <person name="Worsham P."/>
            <person name="Chu M.C."/>
            <person name="Andersen G.L."/>
        </authorList>
    </citation>
    <scope>NUCLEOTIDE SEQUENCE [LARGE SCALE GENOMIC DNA]</scope>
    <source>
        <strain>Nepal516</strain>
    </source>
</reference>
<reference key="2">
    <citation type="submission" date="2009-04" db="EMBL/GenBank/DDBJ databases">
        <title>Yersinia pestis Nepal516A whole genome shotgun sequencing project.</title>
        <authorList>
            <person name="Plunkett G. III"/>
            <person name="Anderson B.D."/>
            <person name="Baumler D.J."/>
            <person name="Burland V."/>
            <person name="Cabot E.L."/>
            <person name="Glasner J.D."/>
            <person name="Mau B."/>
            <person name="Neeno-Eckwall E."/>
            <person name="Perna N.T."/>
            <person name="Munk A.C."/>
            <person name="Tapia R."/>
            <person name="Green L.D."/>
            <person name="Rogers Y.C."/>
            <person name="Detter J.C."/>
            <person name="Bruce D.C."/>
            <person name="Brettin T.S."/>
        </authorList>
    </citation>
    <scope>NUCLEOTIDE SEQUENCE [LARGE SCALE GENOMIC DNA]</scope>
    <source>
        <strain>Nepal516</strain>
    </source>
</reference>
<sequence length="180" mass="20559">MTLKELVVGFGTQVRSLWMIGLHAFHKRETLMYPEEPVYLPPRYRGRIVLTRDPDGEERCVACNLCAVACPVGCISLQKAEQKDGRWYPEFFRINFSRCIFCGLCEEACPTTAIQLTPDFEMGEFKRQDLVYEKEDLLISGPGKYPEYNFYRMAGMAIDGKQKGEAENEAKPIDVKGLMP</sequence>
<organism>
    <name type="scientific">Yersinia pestis bv. Antiqua (strain Nepal516)</name>
    <dbReference type="NCBI Taxonomy" id="377628"/>
    <lineage>
        <taxon>Bacteria</taxon>
        <taxon>Pseudomonadati</taxon>
        <taxon>Pseudomonadota</taxon>
        <taxon>Gammaproteobacteria</taxon>
        <taxon>Enterobacterales</taxon>
        <taxon>Yersiniaceae</taxon>
        <taxon>Yersinia</taxon>
    </lineage>
</organism>
<dbReference type="EC" id="7.1.1.-" evidence="1"/>
<dbReference type="EMBL" id="CP000305">
    <property type="protein sequence ID" value="ABG18472.1"/>
    <property type="molecule type" value="Genomic_DNA"/>
</dbReference>
<dbReference type="EMBL" id="ACNQ01000013">
    <property type="protein sequence ID" value="EEO76195.1"/>
    <property type="molecule type" value="Genomic_DNA"/>
</dbReference>
<dbReference type="RefSeq" id="WP_002210273.1">
    <property type="nucleotide sequence ID" value="NZ_ACNQ01000013.1"/>
</dbReference>
<dbReference type="SMR" id="Q1CHQ8"/>
<dbReference type="GeneID" id="96666079"/>
<dbReference type="KEGG" id="ypn:YPN_2143"/>
<dbReference type="HOGENOM" id="CLU_067218_4_3_6"/>
<dbReference type="Proteomes" id="UP000008936">
    <property type="component" value="Chromosome"/>
</dbReference>
<dbReference type="GO" id="GO:0005886">
    <property type="term" value="C:plasma membrane"/>
    <property type="evidence" value="ECO:0007669"/>
    <property type="project" value="UniProtKB-SubCell"/>
</dbReference>
<dbReference type="GO" id="GO:0051539">
    <property type="term" value="F:4 iron, 4 sulfur cluster binding"/>
    <property type="evidence" value="ECO:0007669"/>
    <property type="project" value="UniProtKB-KW"/>
</dbReference>
<dbReference type="GO" id="GO:0005506">
    <property type="term" value="F:iron ion binding"/>
    <property type="evidence" value="ECO:0007669"/>
    <property type="project" value="UniProtKB-UniRule"/>
</dbReference>
<dbReference type="GO" id="GO:0050136">
    <property type="term" value="F:NADH:ubiquinone reductase (non-electrogenic) activity"/>
    <property type="evidence" value="ECO:0007669"/>
    <property type="project" value="UniProtKB-UniRule"/>
</dbReference>
<dbReference type="GO" id="GO:0048038">
    <property type="term" value="F:quinone binding"/>
    <property type="evidence" value="ECO:0007669"/>
    <property type="project" value="UniProtKB-KW"/>
</dbReference>
<dbReference type="GO" id="GO:0009060">
    <property type="term" value="P:aerobic respiration"/>
    <property type="evidence" value="ECO:0007669"/>
    <property type="project" value="TreeGrafter"/>
</dbReference>
<dbReference type="FunFam" id="3.30.70.3270:FF:000002">
    <property type="entry name" value="NADH-quinone oxidoreductase subunit I"/>
    <property type="match status" value="1"/>
</dbReference>
<dbReference type="Gene3D" id="3.30.70.3270">
    <property type="match status" value="1"/>
</dbReference>
<dbReference type="HAMAP" id="MF_01351">
    <property type="entry name" value="NDH1_NuoI"/>
    <property type="match status" value="1"/>
</dbReference>
<dbReference type="InterPro" id="IPR017896">
    <property type="entry name" value="4Fe4S_Fe-S-bd"/>
</dbReference>
<dbReference type="InterPro" id="IPR017900">
    <property type="entry name" value="4Fe4S_Fe_S_CS"/>
</dbReference>
<dbReference type="InterPro" id="IPR010226">
    <property type="entry name" value="NADH_quinone_OxRdtase_chainI"/>
</dbReference>
<dbReference type="NCBIfam" id="TIGR01971">
    <property type="entry name" value="NuoI"/>
    <property type="match status" value="1"/>
</dbReference>
<dbReference type="NCBIfam" id="NF004536">
    <property type="entry name" value="PRK05888.1-1"/>
    <property type="match status" value="1"/>
</dbReference>
<dbReference type="PANTHER" id="PTHR10849:SF20">
    <property type="entry name" value="NADH DEHYDROGENASE [UBIQUINONE] IRON-SULFUR PROTEIN 8, MITOCHONDRIAL"/>
    <property type="match status" value="1"/>
</dbReference>
<dbReference type="PANTHER" id="PTHR10849">
    <property type="entry name" value="NADH DEHYDROGENASE UBIQUINONE IRON-SULFUR PROTEIN 8, MITOCHONDRIAL"/>
    <property type="match status" value="1"/>
</dbReference>
<dbReference type="Pfam" id="PF12838">
    <property type="entry name" value="Fer4_7"/>
    <property type="match status" value="1"/>
</dbReference>
<dbReference type="SUPFAM" id="SSF54862">
    <property type="entry name" value="4Fe-4S ferredoxins"/>
    <property type="match status" value="1"/>
</dbReference>
<dbReference type="PROSITE" id="PS00198">
    <property type="entry name" value="4FE4S_FER_1"/>
    <property type="match status" value="2"/>
</dbReference>
<dbReference type="PROSITE" id="PS51379">
    <property type="entry name" value="4FE4S_FER_2"/>
    <property type="match status" value="2"/>
</dbReference>
<gene>
    <name evidence="1" type="primary">nuoI</name>
    <name type="ordered locus">YPN_2143</name>
    <name type="ORF">YP516_2392</name>
</gene>
<feature type="chain" id="PRO_0000298563" description="NADH-quinone oxidoreductase subunit I">
    <location>
        <begin position="1"/>
        <end position="180"/>
    </location>
</feature>
<feature type="domain" description="4Fe-4S ferredoxin-type 1" evidence="1">
    <location>
        <begin position="50"/>
        <end position="80"/>
    </location>
</feature>
<feature type="domain" description="4Fe-4S ferredoxin-type 2" evidence="1">
    <location>
        <begin position="90"/>
        <end position="119"/>
    </location>
</feature>
<feature type="binding site" evidence="1">
    <location>
        <position position="60"/>
    </location>
    <ligand>
        <name>[4Fe-4S] cluster</name>
        <dbReference type="ChEBI" id="CHEBI:49883"/>
        <label>1</label>
    </ligand>
</feature>
<feature type="binding site" evidence="1">
    <location>
        <position position="63"/>
    </location>
    <ligand>
        <name>[4Fe-4S] cluster</name>
        <dbReference type="ChEBI" id="CHEBI:49883"/>
        <label>1</label>
    </ligand>
</feature>
<feature type="binding site" evidence="1">
    <location>
        <position position="66"/>
    </location>
    <ligand>
        <name>[4Fe-4S] cluster</name>
        <dbReference type="ChEBI" id="CHEBI:49883"/>
        <label>1</label>
    </ligand>
</feature>
<feature type="binding site" evidence="1">
    <location>
        <position position="70"/>
    </location>
    <ligand>
        <name>[4Fe-4S] cluster</name>
        <dbReference type="ChEBI" id="CHEBI:49883"/>
        <label>2</label>
    </ligand>
</feature>
<feature type="binding site" evidence="1">
    <location>
        <position position="99"/>
    </location>
    <ligand>
        <name>[4Fe-4S] cluster</name>
        <dbReference type="ChEBI" id="CHEBI:49883"/>
        <label>2</label>
    </ligand>
</feature>
<feature type="binding site" evidence="1">
    <location>
        <position position="102"/>
    </location>
    <ligand>
        <name>[4Fe-4S] cluster</name>
        <dbReference type="ChEBI" id="CHEBI:49883"/>
        <label>2</label>
    </ligand>
</feature>
<feature type="binding site" evidence="1">
    <location>
        <position position="105"/>
    </location>
    <ligand>
        <name>[4Fe-4S] cluster</name>
        <dbReference type="ChEBI" id="CHEBI:49883"/>
        <label>2</label>
    </ligand>
</feature>
<feature type="binding site" evidence="1">
    <location>
        <position position="109"/>
    </location>
    <ligand>
        <name>[4Fe-4S] cluster</name>
        <dbReference type="ChEBI" id="CHEBI:49883"/>
        <label>1</label>
    </ligand>
</feature>